<gene>
    <name evidence="1" type="primary">glgA</name>
    <name type="ordered locus">LSEI_2037</name>
</gene>
<comment type="function">
    <text evidence="1">Synthesizes alpha-1,4-glucan chains using ADP-glucose.</text>
</comment>
<comment type="catalytic activity">
    <reaction evidence="1">
        <text>[(1-&gt;4)-alpha-D-glucosyl](n) + ADP-alpha-D-glucose = [(1-&gt;4)-alpha-D-glucosyl](n+1) + ADP + H(+)</text>
        <dbReference type="Rhea" id="RHEA:18189"/>
        <dbReference type="Rhea" id="RHEA-COMP:9584"/>
        <dbReference type="Rhea" id="RHEA-COMP:9587"/>
        <dbReference type="ChEBI" id="CHEBI:15378"/>
        <dbReference type="ChEBI" id="CHEBI:15444"/>
        <dbReference type="ChEBI" id="CHEBI:57498"/>
        <dbReference type="ChEBI" id="CHEBI:456216"/>
        <dbReference type="EC" id="2.4.1.21"/>
    </reaction>
</comment>
<comment type="pathway">
    <text evidence="1">Glycan biosynthesis; glycogen biosynthesis.</text>
</comment>
<comment type="similarity">
    <text evidence="1">Belongs to the glycosyltransferase 1 family. Bacterial/plant glycogen synthase subfamily.</text>
</comment>
<reference key="1">
    <citation type="journal article" date="2006" name="Proc. Natl. Acad. Sci. U.S.A.">
        <title>Comparative genomics of the lactic acid bacteria.</title>
        <authorList>
            <person name="Makarova K.S."/>
            <person name="Slesarev A."/>
            <person name="Wolf Y.I."/>
            <person name="Sorokin A."/>
            <person name="Mirkin B."/>
            <person name="Koonin E.V."/>
            <person name="Pavlov A."/>
            <person name="Pavlova N."/>
            <person name="Karamychev V."/>
            <person name="Polouchine N."/>
            <person name="Shakhova V."/>
            <person name="Grigoriev I."/>
            <person name="Lou Y."/>
            <person name="Rohksar D."/>
            <person name="Lucas S."/>
            <person name="Huang K."/>
            <person name="Goodstein D.M."/>
            <person name="Hawkins T."/>
            <person name="Plengvidhya V."/>
            <person name="Welker D."/>
            <person name="Hughes J."/>
            <person name="Goh Y."/>
            <person name="Benson A."/>
            <person name="Baldwin K."/>
            <person name="Lee J.-H."/>
            <person name="Diaz-Muniz I."/>
            <person name="Dosti B."/>
            <person name="Smeianov V."/>
            <person name="Wechter W."/>
            <person name="Barabote R."/>
            <person name="Lorca G."/>
            <person name="Altermann E."/>
            <person name="Barrangou R."/>
            <person name="Ganesan B."/>
            <person name="Xie Y."/>
            <person name="Rawsthorne H."/>
            <person name="Tamir D."/>
            <person name="Parker C."/>
            <person name="Breidt F."/>
            <person name="Broadbent J.R."/>
            <person name="Hutkins R."/>
            <person name="O'Sullivan D."/>
            <person name="Steele J."/>
            <person name="Unlu G."/>
            <person name="Saier M.H. Jr."/>
            <person name="Klaenhammer T."/>
            <person name="Richardson P."/>
            <person name="Kozyavkin S."/>
            <person name="Weimer B.C."/>
            <person name="Mills D.A."/>
        </authorList>
    </citation>
    <scope>NUCLEOTIDE SEQUENCE [LARGE SCALE GENOMIC DNA]</scope>
    <source>
        <strain>ATCC 334 / BCRC 17002 / CCUG 31169 / CIP 107868 / KCTC 3260 / NRRL B-441</strain>
    </source>
</reference>
<proteinExistence type="inferred from homology"/>
<name>GLGA_LACP3</name>
<feature type="chain" id="PRO_1000014367" description="Glycogen synthase">
    <location>
        <begin position="1"/>
        <end position="481"/>
    </location>
</feature>
<feature type="binding site" evidence="1">
    <location>
        <position position="16"/>
    </location>
    <ligand>
        <name>ADP-alpha-D-glucose</name>
        <dbReference type="ChEBI" id="CHEBI:57498"/>
    </ligand>
</feature>
<organism>
    <name type="scientific">Lacticaseibacillus paracasei (strain ATCC 334 / BCRC 17002 / CCUG 31169 / CIP 107868 / KCTC 3260 / NRRL B-441)</name>
    <name type="common">Lactobacillus paracasei</name>
    <dbReference type="NCBI Taxonomy" id="321967"/>
    <lineage>
        <taxon>Bacteria</taxon>
        <taxon>Bacillati</taxon>
        <taxon>Bacillota</taxon>
        <taxon>Bacilli</taxon>
        <taxon>Lactobacillales</taxon>
        <taxon>Lactobacillaceae</taxon>
        <taxon>Lacticaseibacillus</taxon>
    </lineage>
</organism>
<evidence type="ECO:0000255" key="1">
    <source>
        <dbReference type="HAMAP-Rule" id="MF_00484"/>
    </source>
</evidence>
<accession>Q036T0</accession>
<protein>
    <recommendedName>
        <fullName evidence="1">Glycogen synthase</fullName>
        <ecNumber evidence="1">2.4.1.21</ecNumber>
    </recommendedName>
    <alternativeName>
        <fullName evidence="1">Starch [bacterial glycogen] synthase</fullName>
    </alternativeName>
</protein>
<keyword id="KW-0320">Glycogen biosynthesis</keyword>
<keyword id="KW-0328">Glycosyltransferase</keyword>
<keyword id="KW-1185">Reference proteome</keyword>
<keyword id="KW-0808">Transferase</keyword>
<dbReference type="EC" id="2.4.1.21" evidence="1"/>
<dbReference type="EMBL" id="CP000423">
    <property type="protein sequence ID" value="ABJ70792.1"/>
    <property type="molecule type" value="Genomic_DNA"/>
</dbReference>
<dbReference type="RefSeq" id="WP_003566617.1">
    <property type="nucleotide sequence ID" value="NC_008526.1"/>
</dbReference>
<dbReference type="RefSeq" id="YP_807234.1">
    <property type="nucleotide sequence ID" value="NC_008526.1"/>
</dbReference>
<dbReference type="SMR" id="Q036T0"/>
<dbReference type="STRING" id="321967.LSEI_2037"/>
<dbReference type="CAZy" id="GT5">
    <property type="family name" value="Glycosyltransferase Family 5"/>
</dbReference>
<dbReference type="PaxDb" id="321967-LSEI_2037"/>
<dbReference type="GeneID" id="57090663"/>
<dbReference type="KEGG" id="lca:LSEI_2037"/>
<dbReference type="PATRIC" id="fig|321967.11.peg.2001"/>
<dbReference type="HOGENOM" id="CLU_009583_18_2_9"/>
<dbReference type="UniPathway" id="UPA00164"/>
<dbReference type="Proteomes" id="UP000001651">
    <property type="component" value="Chromosome"/>
</dbReference>
<dbReference type="GO" id="GO:0009011">
    <property type="term" value="F:alpha-1,4-glucan glucosyltransferase (ADP-glucose donor) activity"/>
    <property type="evidence" value="ECO:0007669"/>
    <property type="project" value="UniProtKB-UniRule"/>
</dbReference>
<dbReference type="GO" id="GO:0004373">
    <property type="term" value="F:alpha-1,4-glucan glucosyltransferase (UDP-glucose donor) activity"/>
    <property type="evidence" value="ECO:0007669"/>
    <property type="project" value="InterPro"/>
</dbReference>
<dbReference type="GO" id="GO:0005978">
    <property type="term" value="P:glycogen biosynthetic process"/>
    <property type="evidence" value="ECO:0007669"/>
    <property type="project" value="UniProtKB-UniRule"/>
</dbReference>
<dbReference type="CDD" id="cd03791">
    <property type="entry name" value="GT5_Glycogen_synthase_DULL1-like"/>
    <property type="match status" value="1"/>
</dbReference>
<dbReference type="Gene3D" id="3.40.50.2000">
    <property type="entry name" value="Glycogen Phosphorylase B"/>
    <property type="match status" value="2"/>
</dbReference>
<dbReference type="HAMAP" id="MF_00484">
    <property type="entry name" value="Glycogen_synth"/>
    <property type="match status" value="1"/>
</dbReference>
<dbReference type="InterPro" id="IPR001296">
    <property type="entry name" value="Glyco_trans_1"/>
</dbReference>
<dbReference type="InterPro" id="IPR011835">
    <property type="entry name" value="GS/SS"/>
</dbReference>
<dbReference type="InterPro" id="IPR013534">
    <property type="entry name" value="Starch_synth_cat_dom"/>
</dbReference>
<dbReference type="NCBIfam" id="TIGR02095">
    <property type="entry name" value="glgA"/>
    <property type="match status" value="1"/>
</dbReference>
<dbReference type="NCBIfam" id="NF001898">
    <property type="entry name" value="PRK00654.1-1"/>
    <property type="match status" value="1"/>
</dbReference>
<dbReference type="PANTHER" id="PTHR45825:SF11">
    <property type="entry name" value="ALPHA AMYLASE DOMAIN-CONTAINING PROTEIN"/>
    <property type="match status" value="1"/>
</dbReference>
<dbReference type="PANTHER" id="PTHR45825">
    <property type="entry name" value="GRANULE-BOUND STARCH SYNTHASE 1, CHLOROPLASTIC/AMYLOPLASTIC"/>
    <property type="match status" value="1"/>
</dbReference>
<dbReference type="Pfam" id="PF08323">
    <property type="entry name" value="Glyco_transf_5"/>
    <property type="match status" value="1"/>
</dbReference>
<dbReference type="Pfam" id="PF00534">
    <property type="entry name" value="Glycos_transf_1"/>
    <property type="match status" value="1"/>
</dbReference>
<dbReference type="SUPFAM" id="SSF53756">
    <property type="entry name" value="UDP-Glycosyltransferase/glycogen phosphorylase"/>
    <property type="match status" value="1"/>
</dbReference>
<sequence length="481" mass="53996">MLKVLFTAAESAPFYKTGGLGDVTYALPKAIKKQGVDIRVAIPFYEKKFPAKYLPKVKDLTHFTLEMDGRPVYVGLKTIKLGDVTYYLIDNRQYFDRDGLYGYWDDGGRFGYFQMAVIEMLQVIEWIPDVIHANDWHTAFIPVLLKEKYGWIKPYQQIKTQLTIHNLQFQGWFPPSTLATVFGIGREGFNDDGFGQDGSINWLKGGINYADLVSTVSPSYAKEIQTPAFGEHLDGTLRKQSGKLVGILNGIDSEVYNPATDQNLAYNYDAKNLAGKAKDKKALQDEMHLPKRTDPLFAMVSRLTRQKGADLLVDALENFLVQNNVQVVVLGTGDQDLEEDLSSLQDRFPGQLAVRIDFDEGLAQRIYAGADYFMMPSAFEPSGLAQMMAMRYGTLPIVHETGGLRDSVLAYNAETGAGDGFSFWDYNAGVLTNILRMAKSVYADQPKVYAKLQQHAMVKDFDWHHSAAEYLKGYQRILGKA</sequence>